<organism>
    <name type="scientific">Streptococcus pyogenes serotype M6 (strain ATCC BAA-946 / MGAS10394)</name>
    <dbReference type="NCBI Taxonomy" id="286636"/>
    <lineage>
        <taxon>Bacteria</taxon>
        <taxon>Bacillati</taxon>
        <taxon>Bacillota</taxon>
        <taxon>Bacilli</taxon>
        <taxon>Lactobacillales</taxon>
        <taxon>Streptococcaceae</taxon>
        <taxon>Streptococcus</taxon>
    </lineage>
</organism>
<gene>
    <name evidence="1" type="primary">rbfA</name>
    <name type="ordered locus">M6_Spy1456</name>
</gene>
<proteinExistence type="inferred from homology"/>
<keyword id="KW-0963">Cytoplasm</keyword>
<keyword id="KW-0690">Ribosome biogenesis</keyword>
<feature type="chain" id="PRO_0000102749" description="Ribosome-binding factor A">
    <location>
        <begin position="1"/>
        <end position="116"/>
    </location>
</feature>
<comment type="function">
    <text evidence="1">One of several proteins that assist in the late maturation steps of the functional core of the 30S ribosomal subunit. Associates with free 30S ribosomal subunits (but not with 30S subunits that are part of 70S ribosomes or polysomes). Required for efficient processing of 16S rRNA. May interact with the 5'-terminal helix region of 16S rRNA.</text>
</comment>
<comment type="subunit">
    <text evidence="1">Monomer. Binds 30S ribosomal subunits, but not 50S ribosomal subunits or 70S ribosomes.</text>
</comment>
<comment type="subcellular location">
    <subcellularLocation>
        <location evidence="1">Cytoplasm</location>
    </subcellularLocation>
</comment>
<comment type="similarity">
    <text evidence="1">Belongs to the RbfA family.</text>
</comment>
<comment type="sequence caution" evidence="2">
    <conflict type="erroneous initiation">
        <sequence resource="EMBL-CDS" id="AAT87591"/>
    </conflict>
    <text>Extended N-terminus.</text>
</comment>
<name>RBFA_STRP6</name>
<accession>Q5XAH2</accession>
<reference key="1">
    <citation type="journal article" date="2004" name="J. Infect. Dis.">
        <title>Progress toward characterization of the group A Streptococcus metagenome: complete genome sequence of a macrolide-resistant serotype M6 strain.</title>
        <authorList>
            <person name="Banks D.J."/>
            <person name="Porcella S.F."/>
            <person name="Barbian K.D."/>
            <person name="Beres S.B."/>
            <person name="Philips L.E."/>
            <person name="Voyich J.M."/>
            <person name="DeLeo F.R."/>
            <person name="Martin J.M."/>
            <person name="Somerville G.A."/>
            <person name="Musser J.M."/>
        </authorList>
    </citation>
    <scope>NUCLEOTIDE SEQUENCE [LARGE SCALE GENOMIC DNA]</scope>
    <source>
        <strain>ATCC BAA-946 / MGAS10394</strain>
    </source>
</reference>
<dbReference type="EMBL" id="CP000003">
    <property type="protein sequence ID" value="AAT87591.1"/>
    <property type="status" value="ALT_INIT"/>
    <property type="molecule type" value="Genomic_DNA"/>
</dbReference>
<dbReference type="RefSeq" id="WP_002988820.1">
    <property type="nucleotide sequence ID" value="NC_006086.1"/>
</dbReference>
<dbReference type="SMR" id="Q5XAH2"/>
<dbReference type="KEGG" id="spa:M6_Spy1456"/>
<dbReference type="HOGENOM" id="CLU_089475_3_0_9"/>
<dbReference type="Proteomes" id="UP000001167">
    <property type="component" value="Chromosome"/>
</dbReference>
<dbReference type="GO" id="GO:0005829">
    <property type="term" value="C:cytosol"/>
    <property type="evidence" value="ECO:0007669"/>
    <property type="project" value="TreeGrafter"/>
</dbReference>
<dbReference type="GO" id="GO:0043024">
    <property type="term" value="F:ribosomal small subunit binding"/>
    <property type="evidence" value="ECO:0007669"/>
    <property type="project" value="TreeGrafter"/>
</dbReference>
<dbReference type="GO" id="GO:0030490">
    <property type="term" value="P:maturation of SSU-rRNA"/>
    <property type="evidence" value="ECO:0007669"/>
    <property type="project" value="UniProtKB-UniRule"/>
</dbReference>
<dbReference type="Gene3D" id="3.30.300.20">
    <property type="match status" value="1"/>
</dbReference>
<dbReference type="HAMAP" id="MF_00003">
    <property type="entry name" value="RbfA"/>
    <property type="match status" value="1"/>
</dbReference>
<dbReference type="InterPro" id="IPR015946">
    <property type="entry name" value="KH_dom-like_a/b"/>
</dbReference>
<dbReference type="InterPro" id="IPR000238">
    <property type="entry name" value="RbfA"/>
</dbReference>
<dbReference type="InterPro" id="IPR023799">
    <property type="entry name" value="RbfA_dom_sf"/>
</dbReference>
<dbReference type="InterPro" id="IPR020053">
    <property type="entry name" value="Ribosome-bd_factorA_CS"/>
</dbReference>
<dbReference type="NCBIfam" id="TIGR00082">
    <property type="entry name" value="rbfA"/>
    <property type="match status" value="1"/>
</dbReference>
<dbReference type="PANTHER" id="PTHR33515">
    <property type="entry name" value="RIBOSOME-BINDING FACTOR A, CHLOROPLASTIC-RELATED"/>
    <property type="match status" value="1"/>
</dbReference>
<dbReference type="PANTHER" id="PTHR33515:SF1">
    <property type="entry name" value="RIBOSOME-BINDING FACTOR A, CHLOROPLASTIC-RELATED"/>
    <property type="match status" value="1"/>
</dbReference>
<dbReference type="Pfam" id="PF02033">
    <property type="entry name" value="RBFA"/>
    <property type="match status" value="1"/>
</dbReference>
<dbReference type="SUPFAM" id="SSF89919">
    <property type="entry name" value="Ribosome-binding factor A, RbfA"/>
    <property type="match status" value="1"/>
</dbReference>
<dbReference type="PROSITE" id="PS01319">
    <property type="entry name" value="RBFA"/>
    <property type="match status" value="1"/>
</dbReference>
<evidence type="ECO:0000255" key="1">
    <source>
        <dbReference type="HAMAP-Rule" id="MF_00003"/>
    </source>
</evidence>
<evidence type="ECO:0000305" key="2"/>
<sequence length="116" mass="13226">MANHRIDRVGMEIKREVNDILQKKVRDPRVQGVTITEVQMQGDLSLAKVYYTIMSDLASDNQKAQTGLEKATGTIKRELGKQLTMYKIPDLVFEKDNSIAYGNKIDQLLRELDNKS</sequence>
<protein>
    <recommendedName>
        <fullName evidence="1">Ribosome-binding factor A</fullName>
    </recommendedName>
</protein>